<protein>
    <recommendedName>
        <fullName evidence="1">1,4-alpha-glucan branching enzyme GlgB</fullName>
        <ecNumber evidence="1">2.4.1.18</ecNumber>
    </recommendedName>
    <alternativeName>
        <fullName evidence="1">1,4-alpha-D-glucan:1,4-alpha-D-glucan 6-glucosyl-transferase</fullName>
    </alternativeName>
    <alternativeName>
        <fullName evidence="1">Alpha-(1-&gt;4)-glucan branching enzyme</fullName>
    </alternativeName>
    <alternativeName>
        <fullName evidence="1">Glycogen branching enzyme</fullName>
        <shortName evidence="1">BE</shortName>
    </alternativeName>
</protein>
<feature type="chain" id="PRO_0000188672" description="1,4-alpha-glucan branching enzyme GlgB">
    <location>
        <begin position="1"/>
        <end position="764"/>
    </location>
</feature>
<feature type="active site" description="Nucleophile" evidence="1">
    <location>
        <position position="434"/>
    </location>
</feature>
<feature type="active site" description="Proton donor" evidence="1">
    <location>
        <position position="487"/>
    </location>
</feature>
<comment type="function">
    <text evidence="1">Catalyzes the formation of the alpha-1,6-glucosidic linkages in glycogen by scission of a 1,4-alpha-linked oligosaccharide from growing alpha-1,4-glucan chains and the subsequent attachment of the oligosaccharide to the alpha-1,6 position.</text>
</comment>
<comment type="catalytic activity">
    <reaction evidence="1">
        <text>Transfers a segment of a (1-&gt;4)-alpha-D-glucan chain to a primary hydroxy group in a similar glucan chain.</text>
        <dbReference type="EC" id="2.4.1.18"/>
    </reaction>
</comment>
<comment type="pathway">
    <text evidence="1">Glycan biosynthesis; glycogen biosynthesis.</text>
</comment>
<comment type="subunit">
    <text evidence="1">Monomer.</text>
</comment>
<comment type="similarity">
    <text evidence="1">Belongs to the glycosyl hydrolase 13 family. GlgB subfamily.</text>
</comment>
<gene>
    <name evidence="1" type="primary">glgB</name>
    <name type="ordered locus">all0713</name>
</gene>
<evidence type="ECO:0000255" key="1">
    <source>
        <dbReference type="HAMAP-Rule" id="MF_00685"/>
    </source>
</evidence>
<keyword id="KW-0119">Carbohydrate metabolism</keyword>
<keyword id="KW-0320">Glycogen biosynthesis</keyword>
<keyword id="KW-0321">Glycogen metabolism</keyword>
<keyword id="KW-0328">Glycosyltransferase</keyword>
<keyword id="KW-1185">Reference proteome</keyword>
<keyword id="KW-0808">Transferase</keyword>
<name>GLGB_NOSS1</name>
<reference key="1">
    <citation type="journal article" date="2001" name="DNA Res.">
        <title>Complete genomic sequence of the filamentous nitrogen-fixing cyanobacterium Anabaena sp. strain PCC 7120.</title>
        <authorList>
            <person name="Kaneko T."/>
            <person name="Nakamura Y."/>
            <person name="Wolk C.P."/>
            <person name="Kuritz T."/>
            <person name="Sasamoto S."/>
            <person name="Watanabe A."/>
            <person name="Iriguchi M."/>
            <person name="Ishikawa A."/>
            <person name="Kawashima K."/>
            <person name="Kimura T."/>
            <person name="Kishida Y."/>
            <person name="Kohara M."/>
            <person name="Matsumoto M."/>
            <person name="Matsuno A."/>
            <person name="Muraki A."/>
            <person name="Nakazaki N."/>
            <person name="Shimpo S."/>
            <person name="Sugimoto M."/>
            <person name="Takazawa M."/>
            <person name="Yamada M."/>
            <person name="Yasuda M."/>
            <person name="Tabata S."/>
        </authorList>
    </citation>
    <scope>NUCLEOTIDE SEQUENCE [LARGE SCALE GENOMIC DNA]</scope>
    <source>
        <strain>PCC 7120 / SAG 25.82 / UTEX 2576</strain>
    </source>
</reference>
<organism>
    <name type="scientific">Nostoc sp. (strain PCC 7120 / SAG 25.82 / UTEX 2576)</name>
    <dbReference type="NCBI Taxonomy" id="103690"/>
    <lineage>
        <taxon>Bacteria</taxon>
        <taxon>Bacillati</taxon>
        <taxon>Cyanobacteriota</taxon>
        <taxon>Cyanophyceae</taxon>
        <taxon>Nostocales</taxon>
        <taxon>Nostocaceae</taxon>
        <taxon>Nostoc</taxon>
    </lineage>
</organism>
<dbReference type="EC" id="2.4.1.18" evidence="1"/>
<dbReference type="EMBL" id="BA000019">
    <property type="protein sequence ID" value="BAB72670.1"/>
    <property type="molecule type" value="Genomic_DNA"/>
</dbReference>
<dbReference type="PIR" id="AG1895">
    <property type="entry name" value="AG1895"/>
</dbReference>
<dbReference type="SMR" id="Q8YYX9"/>
<dbReference type="STRING" id="103690.gene:10492723"/>
<dbReference type="CAZy" id="CBM48">
    <property type="family name" value="Carbohydrate-Binding Module Family 48"/>
</dbReference>
<dbReference type="CAZy" id="GH13">
    <property type="family name" value="Glycoside Hydrolase Family 13"/>
</dbReference>
<dbReference type="KEGG" id="ana:all0713"/>
<dbReference type="eggNOG" id="COG0296">
    <property type="taxonomic scope" value="Bacteria"/>
</dbReference>
<dbReference type="UniPathway" id="UPA00164"/>
<dbReference type="Proteomes" id="UP000002483">
    <property type="component" value="Chromosome"/>
</dbReference>
<dbReference type="GO" id="GO:0005829">
    <property type="term" value="C:cytosol"/>
    <property type="evidence" value="ECO:0007669"/>
    <property type="project" value="TreeGrafter"/>
</dbReference>
<dbReference type="GO" id="GO:0003844">
    <property type="term" value="F:1,4-alpha-glucan branching enzyme activity"/>
    <property type="evidence" value="ECO:0007669"/>
    <property type="project" value="UniProtKB-UniRule"/>
</dbReference>
<dbReference type="GO" id="GO:0043169">
    <property type="term" value="F:cation binding"/>
    <property type="evidence" value="ECO:0007669"/>
    <property type="project" value="InterPro"/>
</dbReference>
<dbReference type="GO" id="GO:0004553">
    <property type="term" value="F:hydrolase activity, hydrolyzing O-glycosyl compounds"/>
    <property type="evidence" value="ECO:0007669"/>
    <property type="project" value="InterPro"/>
</dbReference>
<dbReference type="GO" id="GO:0005978">
    <property type="term" value="P:glycogen biosynthetic process"/>
    <property type="evidence" value="ECO:0007669"/>
    <property type="project" value="UniProtKB-UniRule"/>
</dbReference>
<dbReference type="CDD" id="cd11322">
    <property type="entry name" value="AmyAc_Glg_BE"/>
    <property type="match status" value="1"/>
</dbReference>
<dbReference type="CDD" id="cd02855">
    <property type="entry name" value="E_set_GBE_prok_N"/>
    <property type="match status" value="1"/>
</dbReference>
<dbReference type="FunFam" id="2.60.40.10:FF:000169">
    <property type="entry name" value="1,4-alpha-glucan branching enzyme GlgB"/>
    <property type="match status" value="1"/>
</dbReference>
<dbReference type="FunFam" id="2.60.40.1180:FF:000002">
    <property type="entry name" value="1,4-alpha-glucan branching enzyme GlgB"/>
    <property type="match status" value="1"/>
</dbReference>
<dbReference type="FunFam" id="3.20.20.80:FF:000003">
    <property type="entry name" value="1,4-alpha-glucan branching enzyme GlgB"/>
    <property type="match status" value="1"/>
</dbReference>
<dbReference type="Gene3D" id="3.20.20.80">
    <property type="entry name" value="Glycosidases"/>
    <property type="match status" value="1"/>
</dbReference>
<dbReference type="Gene3D" id="2.60.40.1180">
    <property type="entry name" value="Golgi alpha-mannosidase II"/>
    <property type="match status" value="1"/>
</dbReference>
<dbReference type="Gene3D" id="2.60.40.10">
    <property type="entry name" value="Immunoglobulins"/>
    <property type="match status" value="2"/>
</dbReference>
<dbReference type="HAMAP" id="MF_00685">
    <property type="entry name" value="GlgB"/>
    <property type="match status" value="1"/>
</dbReference>
<dbReference type="InterPro" id="IPR006048">
    <property type="entry name" value="A-amylase/branching_C"/>
</dbReference>
<dbReference type="InterPro" id="IPR037439">
    <property type="entry name" value="Branching_enzy"/>
</dbReference>
<dbReference type="InterPro" id="IPR006407">
    <property type="entry name" value="GlgB"/>
</dbReference>
<dbReference type="InterPro" id="IPR054169">
    <property type="entry name" value="GlgB_N"/>
</dbReference>
<dbReference type="InterPro" id="IPR044143">
    <property type="entry name" value="GlgB_N_E_set_prok"/>
</dbReference>
<dbReference type="InterPro" id="IPR006047">
    <property type="entry name" value="Glyco_hydro_13_cat_dom"/>
</dbReference>
<dbReference type="InterPro" id="IPR004193">
    <property type="entry name" value="Glyco_hydro_13_N"/>
</dbReference>
<dbReference type="InterPro" id="IPR013780">
    <property type="entry name" value="Glyco_hydro_b"/>
</dbReference>
<dbReference type="InterPro" id="IPR017853">
    <property type="entry name" value="Glycoside_hydrolase_SF"/>
</dbReference>
<dbReference type="InterPro" id="IPR013783">
    <property type="entry name" value="Ig-like_fold"/>
</dbReference>
<dbReference type="InterPro" id="IPR014756">
    <property type="entry name" value="Ig_E-set"/>
</dbReference>
<dbReference type="NCBIfam" id="TIGR01515">
    <property type="entry name" value="branching_enzym"/>
    <property type="match status" value="1"/>
</dbReference>
<dbReference type="NCBIfam" id="NF003811">
    <property type="entry name" value="PRK05402.1"/>
    <property type="match status" value="1"/>
</dbReference>
<dbReference type="NCBIfam" id="NF008967">
    <property type="entry name" value="PRK12313.1"/>
    <property type="match status" value="1"/>
</dbReference>
<dbReference type="PANTHER" id="PTHR43651">
    <property type="entry name" value="1,4-ALPHA-GLUCAN-BRANCHING ENZYME"/>
    <property type="match status" value="1"/>
</dbReference>
<dbReference type="PANTHER" id="PTHR43651:SF3">
    <property type="entry name" value="1,4-ALPHA-GLUCAN-BRANCHING ENZYME"/>
    <property type="match status" value="1"/>
</dbReference>
<dbReference type="Pfam" id="PF00128">
    <property type="entry name" value="Alpha-amylase"/>
    <property type="match status" value="2"/>
</dbReference>
<dbReference type="Pfam" id="PF02806">
    <property type="entry name" value="Alpha-amylase_C"/>
    <property type="match status" value="1"/>
</dbReference>
<dbReference type="Pfam" id="PF02922">
    <property type="entry name" value="CBM_48"/>
    <property type="match status" value="1"/>
</dbReference>
<dbReference type="Pfam" id="PF22019">
    <property type="entry name" value="GlgB_N"/>
    <property type="match status" value="1"/>
</dbReference>
<dbReference type="PIRSF" id="PIRSF000463">
    <property type="entry name" value="GlgB"/>
    <property type="match status" value="1"/>
</dbReference>
<dbReference type="SMART" id="SM00642">
    <property type="entry name" value="Aamy"/>
    <property type="match status" value="1"/>
</dbReference>
<dbReference type="SUPFAM" id="SSF51445">
    <property type="entry name" value="(Trans)glycosidases"/>
    <property type="match status" value="1"/>
</dbReference>
<dbReference type="SUPFAM" id="SSF81296">
    <property type="entry name" value="E set domains"/>
    <property type="match status" value="2"/>
</dbReference>
<dbReference type="SUPFAM" id="SSF51011">
    <property type="entry name" value="Glycosyl hydrolase domain"/>
    <property type="match status" value="1"/>
</dbReference>
<proteinExistence type="inferred from homology"/>
<sequence length="764" mass="88808">MSMTTIAPEQVNRIVWNQHHDPFEILGSHPIEQNGKTVWVVRAYLPNASAAWVVLPEQRQEYPMQTVHDPHFFECIIETSELSNYQLKTKEGEHERVSYDPYAFRSPRLTDFDLHLFAEGNHHRIYEKLGAHFTEVGGVKGVYFAVWAPNARNVSVLGDFNLWDGRKHQMRKGATGVWELFIPEIGVGEHYKYEIKNFAGHIYEKSDPFGFQQEPRPKTASIVSNLNSYNWSDEDWLEQRRHTDPLTQPISVYEVHLGSWLHAASAEPAQLPNGETEPVVIASELNPGARFLTYRELASRLIPYVKELGYTHIELLPIAEHPFDGSWGYQVTGYYAPTSRFGTPEDFMYFVDQCHQNNIGVLVDWVPGHFPKDGHGLAFFDGTHLYEHADPRKGEHKEWGTLVFNYSRNEVRNFLVANALFWFDKYHIDGIRVDAVASMLYLDYCRKEGEWLPNQYGGRENLEAADFLRQVNHLLFSYFPGVLSIAEESTDWPMVSWPTYTGGLGFNLKWNMGWMHDMLDYFSMDPWFRQFHQNNITFSMWYNHSENFMLALSHDEVVHGKSNIIGKMPGDKWQKLANVRCLFAYMFAHPGKKTMFMSMEFGQWSEWNVWADLEWPLLQFEPHQQLKKFFTELNKLYRSEPALYTLDFAREGFDWIDCSDNRHSVVSFIRREKDTENFVVVICNFTPQPHSHYRIGVPEKGFYTELFNSDARQYGGSNMGNLGGKWTDDWSMHNRPYSLDLCLPPLGVLILKMDKEKTAKALGS</sequence>
<accession>Q8YYX9</accession>